<organism>
    <name type="scientific">Micruroides euryxanthus</name>
    <name type="common">Sonoran coral snake</name>
    <name type="synonym">Elaps euryxanthus</name>
    <dbReference type="NCBI Taxonomy" id="39080"/>
    <lineage>
        <taxon>Eukaryota</taxon>
        <taxon>Metazoa</taxon>
        <taxon>Chordata</taxon>
        <taxon>Craniata</taxon>
        <taxon>Vertebrata</taxon>
        <taxon>Euteleostomi</taxon>
        <taxon>Lepidosauria</taxon>
        <taxon>Squamata</taxon>
        <taxon>Bifurcata</taxon>
        <taxon>Unidentata</taxon>
        <taxon>Episquamata</taxon>
        <taxon>Toxicofera</taxon>
        <taxon>Serpentes</taxon>
        <taxon>Colubroidea</taxon>
        <taxon>Elapidae</taxon>
        <taxon>Elapinae</taxon>
        <taxon>Micruroides</taxon>
    </lineage>
</organism>
<name>CYB_MICEU</name>
<geneLocation type="mitochondrion"/>
<protein>
    <recommendedName>
        <fullName>Cytochrome b</fullName>
    </recommendedName>
    <alternativeName>
        <fullName>Complex III subunit 3</fullName>
    </alternativeName>
    <alternativeName>
        <fullName>Complex III subunit III</fullName>
    </alternativeName>
    <alternativeName>
        <fullName>Cytochrome b-c1 complex subunit 3</fullName>
    </alternativeName>
    <alternativeName>
        <fullName>Ubiquinol-cytochrome-c reductase complex cytochrome b subunit</fullName>
    </alternativeName>
</protein>
<reference key="1">
    <citation type="journal article" date="2000" name="Mol. Phylogenet. Evol.">
        <title>Phylogenetic relationships of elapid snakes based on cytochrome b mtDNA sequences.</title>
        <authorList>
            <person name="Slowinski J.B."/>
            <person name="Keogh J.S."/>
        </authorList>
    </citation>
    <scope>NUCLEOTIDE SEQUENCE [GENOMIC DNA]</scope>
</reference>
<accession>Q9MLK5</accession>
<proteinExistence type="inferred from homology"/>
<evidence type="ECO:0000250" key="1"/>
<evidence type="ECO:0000250" key="2">
    <source>
        <dbReference type="UniProtKB" id="P00157"/>
    </source>
</evidence>
<evidence type="ECO:0000255" key="3">
    <source>
        <dbReference type="PROSITE-ProRule" id="PRU00967"/>
    </source>
</evidence>
<evidence type="ECO:0000255" key="4">
    <source>
        <dbReference type="PROSITE-ProRule" id="PRU00968"/>
    </source>
</evidence>
<dbReference type="EMBL" id="AF217823">
    <property type="protein sequence ID" value="AAF37242.1"/>
    <property type="molecule type" value="Genomic_DNA"/>
</dbReference>
<dbReference type="SMR" id="Q9MLK5"/>
<dbReference type="GO" id="GO:0005743">
    <property type="term" value="C:mitochondrial inner membrane"/>
    <property type="evidence" value="ECO:0007669"/>
    <property type="project" value="UniProtKB-SubCell"/>
</dbReference>
<dbReference type="GO" id="GO:0045275">
    <property type="term" value="C:respiratory chain complex III"/>
    <property type="evidence" value="ECO:0007669"/>
    <property type="project" value="InterPro"/>
</dbReference>
<dbReference type="GO" id="GO:0046872">
    <property type="term" value="F:metal ion binding"/>
    <property type="evidence" value="ECO:0007669"/>
    <property type="project" value="UniProtKB-KW"/>
</dbReference>
<dbReference type="GO" id="GO:0008121">
    <property type="term" value="F:ubiquinol-cytochrome-c reductase activity"/>
    <property type="evidence" value="ECO:0007669"/>
    <property type="project" value="InterPro"/>
</dbReference>
<dbReference type="GO" id="GO:0006122">
    <property type="term" value="P:mitochondrial electron transport, ubiquinol to cytochrome c"/>
    <property type="evidence" value="ECO:0007669"/>
    <property type="project" value="TreeGrafter"/>
</dbReference>
<dbReference type="CDD" id="cd00290">
    <property type="entry name" value="cytochrome_b_C"/>
    <property type="match status" value="1"/>
</dbReference>
<dbReference type="CDD" id="cd00284">
    <property type="entry name" value="Cytochrome_b_N"/>
    <property type="match status" value="1"/>
</dbReference>
<dbReference type="Gene3D" id="1.20.810.10">
    <property type="entry name" value="Cytochrome Bc1 Complex, Chain C"/>
    <property type="match status" value="1"/>
</dbReference>
<dbReference type="InterPro" id="IPR005798">
    <property type="entry name" value="Cyt_b/b6_C"/>
</dbReference>
<dbReference type="InterPro" id="IPR036150">
    <property type="entry name" value="Cyt_b/b6_C_sf"/>
</dbReference>
<dbReference type="InterPro" id="IPR005797">
    <property type="entry name" value="Cyt_b/b6_N"/>
</dbReference>
<dbReference type="InterPro" id="IPR027387">
    <property type="entry name" value="Cytb/b6-like_sf"/>
</dbReference>
<dbReference type="InterPro" id="IPR030689">
    <property type="entry name" value="Cytochrome_b"/>
</dbReference>
<dbReference type="InterPro" id="IPR048260">
    <property type="entry name" value="Cytochrome_b_C_euk/bac"/>
</dbReference>
<dbReference type="InterPro" id="IPR048259">
    <property type="entry name" value="Cytochrome_b_N_euk/bac"/>
</dbReference>
<dbReference type="InterPro" id="IPR016174">
    <property type="entry name" value="Di-haem_cyt_TM"/>
</dbReference>
<dbReference type="PANTHER" id="PTHR19271">
    <property type="entry name" value="CYTOCHROME B"/>
    <property type="match status" value="1"/>
</dbReference>
<dbReference type="PANTHER" id="PTHR19271:SF16">
    <property type="entry name" value="CYTOCHROME B"/>
    <property type="match status" value="1"/>
</dbReference>
<dbReference type="Pfam" id="PF00032">
    <property type="entry name" value="Cytochrom_B_C"/>
    <property type="match status" value="1"/>
</dbReference>
<dbReference type="Pfam" id="PF00033">
    <property type="entry name" value="Cytochrome_B"/>
    <property type="match status" value="1"/>
</dbReference>
<dbReference type="PIRSF" id="PIRSF038885">
    <property type="entry name" value="COB"/>
    <property type="match status" value="1"/>
</dbReference>
<dbReference type="SUPFAM" id="SSF81648">
    <property type="entry name" value="a domain/subunit of cytochrome bc1 complex (Ubiquinol-cytochrome c reductase)"/>
    <property type="match status" value="1"/>
</dbReference>
<dbReference type="SUPFAM" id="SSF81342">
    <property type="entry name" value="Transmembrane di-heme cytochromes"/>
    <property type="match status" value="1"/>
</dbReference>
<dbReference type="PROSITE" id="PS51003">
    <property type="entry name" value="CYTB_CTER"/>
    <property type="match status" value="1"/>
</dbReference>
<dbReference type="PROSITE" id="PS51002">
    <property type="entry name" value="CYTB_NTER"/>
    <property type="match status" value="1"/>
</dbReference>
<feature type="chain" id="PRO_0000061178" description="Cytochrome b">
    <location>
        <begin position="1"/>
        <end position="371"/>
    </location>
</feature>
<feature type="transmembrane region" description="Helical" evidence="2">
    <location>
        <begin position="25"/>
        <end position="45"/>
    </location>
</feature>
<feature type="transmembrane region" description="Helical" evidence="2">
    <location>
        <begin position="69"/>
        <end position="90"/>
    </location>
</feature>
<feature type="transmembrane region" description="Helical" evidence="2">
    <location>
        <begin position="105"/>
        <end position="125"/>
    </location>
</feature>
<feature type="transmembrane region" description="Helical" evidence="2">
    <location>
        <begin position="170"/>
        <end position="190"/>
    </location>
</feature>
<feature type="transmembrane region" description="Helical" evidence="2">
    <location>
        <begin position="218"/>
        <end position="238"/>
    </location>
</feature>
<feature type="transmembrane region" description="Helical" evidence="2">
    <location>
        <begin position="280"/>
        <end position="300"/>
    </location>
</feature>
<feature type="transmembrane region" description="Helical" evidence="2">
    <location>
        <begin position="312"/>
        <end position="332"/>
    </location>
</feature>
<feature type="transmembrane region" description="Helical" evidence="2">
    <location>
        <begin position="339"/>
        <end position="358"/>
    </location>
</feature>
<feature type="binding site" description="axial binding residue" evidence="2">
    <location>
        <position position="75"/>
    </location>
    <ligand>
        <name>heme b</name>
        <dbReference type="ChEBI" id="CHEBI:60344"/>
        <label>b562</label>
    </ligand>
    <ligandPart>
        <name>Fe</name>
        <dbReference type="ChEBI" id="CHEBI:18248"/>
    </ligandPart>
</feature>
<feature type="binding site" description="axial binding residue" evidence="2">
    <location>
        <position position="89"/>
    </location>
    <ligand>
        <name>heme b</name>
        <dbReference type="ChEBI" id="CHEBI:60344"/>
        <label>b566</label>
    </ligand>
    <ligandPart>
        <name>Fe</name>
        <dbReference type="ChEBI" id="CHEBI:18248"/>
    </ligandPart>
</feature>
<feature type="binding site" description="axial binding residue" evidence="2">
    <location>
        <position position="174"/>
    </location>
    <ligand>
        <name>heme b</name>
        <dbReference type="ChEBI" id="CHEBI:60344"/>
        <label>b562</label>
    </ligand>
    <ligandPart>
        <name>Fe</name>
        <dbReference type="ChEBI" id="CHEBI:18248"/>
    </ligandPart>
</feature>
<feature type="binding site" description="axial binding residue" evidence="2">
    <location>
        <position position="188"/>
    </location>
    <ligand>
        <name>heme b</name>
        <dbReference type="ChEBI" id="CHEBI:60344"/>
        <label>b566</label>
    </ligand>
    <ligandPart>
        <name>Fe</name>
        <dbReference type="ChEBI" id="CHEBI:18248"/>
    </ligandPart>
</feature>
<feature type="binding site" evidence="2">
    <location>
        <position position="193"/>
    </location>
    <ligand>
        <name>a ubiquinone</name>
        <dbReference type="ChEBI" id="CHEBI:16389"/>
    </ligand>
</feature>
<gene>
    <name type="primary">MT-CYB</name>
    <name type="synonym">COB</name>
    <name type="synonym">CYTB</name>
    <name type="synonym">MTCYB</name>
</gene>
<keyword id="KW-0249">Electron transport</keyword>
<keyword id="KW-0349">Heme</keyword>
<keyword id="KW-0408">Iron</keyword>
<keyword id="KW-0472">Membrane</keyword>
<keyword id="KW-0479">Metal-binding</keyword>
<keyword id="KW-0496">Mitochondrion</keyword>
<keyword id="KW-0999">Mitochondrion inner membrane</keyword>
<keyword id="KW-0679">Respiratory chain</keyword>
<keyword id="KW-0812">Transmembrane</keyword>
<keyword id="KW-1133">Transmembrane helix</keyword>
<keyword id="KW-0813">Transport</keyword>
<keyword id="KW-0830">Ubiquinone</keyword>
<sequence>MLNQHTLLISNLLPVGSNISTWWNFGSLLLTCLMLQILTGFFLAIHYTANINLAFSSVIHITRDVPYGWIMQNTHAIGASLFFICIYTHIARGLYYGSYLNKSVWLSGTTLLIILMATAFFGYVLPWGQMSFWAATVITNLLTAIPYLGTTVTTWLWGGFSINDPTLTRFFALHFILPFIIISMSSIHIILLHNEGSNNPLGTNSDIDKIPFHPYHLYKDMTMVSIMIMLLLMVMTFAPNLFNDPENFSKANPLVTPQHIKPEWYFLFAYGILRSIPNKLGGTLALFLSIIILTTTPFTHTSYIQSMAFRPLTQILFWTLIATFTTITWTATKPVETPFIYISQMTSIMYFSFFIMNPLLGWAENKIMMNM</sequence>
<comment type="function">
    <text evidence="2">Component of the ubiquinol-cytochrome c reductase complex (complex III or cytochrome b-c1 complex) that is part of the mitochondrial respiratory chain. The b-c1 complex mediates electron transfer from ubiquinol to cytochrome c. Contributes to the generation of a proton gradient across the mitochondrial membrane that is then used for ATP synthesis.</text>
</comment>
<comment type="cofactor">
    <cofactor evidence="2">
        <name>heme b</name>
        <dbReference type="ChEBI" id="CHEBI:60344"/>
    </cofactor>
    <text evidence="2">Binds 2 heme b groups non-covalently.</text>
</comment>
<comment type="subunit">
    <text evidence="2">The cytochrome bc1 complex contains 3 respiratory subunits (MT-CYB, CYC1 and UQCRFS1), 2 core proteins (UQCRC1 and UQCRC2) and probably 6 low-molecular weight proteins.</text>
</comment>
<comment type="subcellular location">
    <subcellularLocation>
        <location evidence="2">Mitochondrion inner membrane</location>
        <topology evidence="2">Multi-pass membrane protein</topology>
    </subcellularLocation>
</comment>
<comment type="miscellaneous">
    <text evidence="1">Heme 1 (or BL or b562) is low-potential and absorbs at about 562 nm, and heme 2 (or BH or b566) is high-potential and absorbs at about 566 nm.</text>
</comment>
<comment type="similarity">
    <text evidence="3 4">Belongs to the cytochrome b family.</text>
</comment>
<comment type="caution">
    <text evidence="2">The full-length protein contains only eight transmembrane helices, not nine as predicted by bioinformatics tools.</text>
</comment>